<name>ROCK1_RAT</name>
<comment type="function">
    <text evidence="2 3 4 13 15">Protein kinase which is a key regulator of the actin cytoskeleton and cell polarity (PubMed:19131646, PubMed:9353125). Involved in regulation of smooth muscle contraction, actin cytoskeleton organization, stress fiber and focal adhesion formation, neurite retraction, cell adhesion and motility via phosphorylation of DAPK3, GFAP, LIMK1, LIMK2, MYL9/MLC2, TPPP, PFN1 and PPP1R12A (PubMed:19131646, PubMed:9353125). Phosphorylates FHOD1 and acts synergistically with it to promote SRC-dependent non-apoptotic plasma membrane blebbing. Phosphorylates JIP3 and regulates the recruitment of JNK to JIP3 upon UVB-induced stress (By similarity). Acts as a suppressor of inflammatory cell migration by regulating PTEN phosphorylation and stability (By similarity). Acts as a negative regulator of VEGF-induced angiogenic endothelial cell activation. Required for centrosome positioning and centrosome-dependent exit from mitosis (By similarity). Plays a role in terminal erythroid differentiation (By similarity). Inhibits podocyte motility via regulation of actin cytoskeletal dynamics and phosphorylation of CFL1 (By similarity). Promotes keratinocyte terminal differentiation (By similarity). Involved in osteoblast compaction through the fibronectin fibrillogenesis cell-mediated matrix assembly process, essential for osteoblast mineralization (By similarity). May regulate closure of the eyelids and ventral body wall by inducing the assembly of actomyosin bundles (By similarity).</text>
</comment>
<comment type="catalytic activity">
    <reaction evidence="3">
        <text>L-seryl-[protein] + ATP = O-phospho-L-seryl-[protein] + ADP + H(+)</text>
        <dbReference type="Rhea" id="RHEA:17989"/>
        <dbReference type="Rhea" id="RHEA-COMP:9863"/>
        <dbReference type="Rhea" id="RHEA-COMP:11604"/>
        <dbReference type="ChEBI" id="CHEBI:15378"/>
        <dbReference type="ChEBI" id="CHEBI:29999"/>
        <dbReference type="ChEBI" id="CHEBI:30616"/>
        <dbReference type="ChEBI" id="CHEBI:83421"/>
        <dbReference type="ChEBI" id="CHEBI:456216"/>
        <dbReference type="EC" id="2.7.11.1"/>
    </reaction>
    <physiologicalReaction direction="left-to-right" evidence="3">
        <dbReference type="Rhea" id="RHEA:17990"/>
    </physiologicalReaction>
</comment>
<comment type="catalytic activity">
    <reaction evidence="3">
        <text>L-threonyl-[protein] + ATP = O-phospho-L-threonyl-[protein] + ADP + H(+)</text>
        <dbReference type="Rhea" id="RHEA:46608"/>
        <dbReference type="Rhea" id="RHEA-COMP:11060"/>
        <dbReference type="Rhea" id="RHEA-COMP:11605"/>
        <dbReference type="ChEBI" id="CHEBI:15378"/>
        <dbReference type="ChEBI" id="CHEBI:30013"/>
        <dbReference type="ChEBI" id="CHEBI:30616"/>
        <dbReference type="ChEBI" id="CHEBI:61977"/>
        <dbReference type="ChEBI" id="CHEBI:456216"/>
        <dbReference type="EC" id="2.7.11.1"/>
    </reaction>
    <physiologicalReaction direction="left-to-right" evidence="3">
        <dbReference type="Rhea" id="RHEA:46609"/>
    </physiologicalReaction>
</comment>
<comment type="cofactor">
    <cofactor evidence="1">
        <name>Mg(2+)</name>
        <dbReference type="ChEBI" id="CHEBI:18420"/>
    </cofactor>
</comment>
<comment type="activity regulation">
    <text evidence="15">Activated by RHOA binding. Inhibited by Y-27632.</text>
</comment>
<comment type="subunit">
    <text evidence="1 3 13 14">Homodimer (By similarity). Interacts with GEM, MYLC2B, RHOE, LIMK1, LIMK2, TSG101, CHORDC1, DAPK3, PFN1, PTEN and JIP3 (By similarity). Interacts with FHOD1 in a Src-dependent manner (By similarity). Interacts with ITGB1BP1 (via N-terminus and PTB domain) (By similarity). Interacts with RHOA (activated by GTP), RHOB, RHOC and PPP1R12A. Interacts with SHROOM3 (By similarity).</text>
</comment>
<comment type="subcellular location">
    <subcellularLocation>
        <location evidence="13">Cytoplasm</location>
    </subcellularLocation>
    <subcellularLocation>
        <location evidence="13">Cytoplasm</location>
        <location evidence="13">Cytoskeleton</location>
        <location evidence="13">Microtubule organizing center</location>
        <location evidence="13">Centrosome</location>
        <location evidence="13">Centriole</location>
    </subcellularLocation>
    <subcellularLocation>
        <location evidence="2">Golgi apparatus membrane</location>
        <topology evidence="2">Peripheral membrane protein</topology>
    </subcellularLocation>
    <subcellularLocation>
        <location evidence="2">Cell projection</location>
        <location evidence="2">Bleb</location>
    </subcellularLocation>
    <subcellularLocation>
        <location evidence="2">Cytoplasm</location>
        <location evidence="2">Cytoskeleton</location>
    </subcellularLocation>
    <subcellularLocation>
        <location evidence="2">Cell membrane</location>
    </subcellularLocation>
    <subcellularLocation>
        <location evidence="2">Cell projection</location>
        <location evidence="2">Lamellipodium</location>
    </subcellularLocation>
    <subcellularLocation>
        <location evidence="2">Cell projection</location>
        <location evidence="2">Ruffle</location>
    </subcellularLocation>
    <text evidence="2">A small proportion is associated with Golgi membranes (By similarity). Associated with the mother centriole and an intercentriolar linker (By similarity). Colocalizes with ITGB1BP1 and ITGB1 at the cell membrane predominantly in lamellipodia and membrane ruffles, but also in retraction fibers (By similarity). Localizes at the cell membrane in an ITGB1BP1-dependent manner (By similarity).</text>
</comment>
<comment type="alternative products">
    <event type="alternative splicing"/>
    <isoform>
        <id>Q63644-1</id>
        <name>1</name>
        <sequence type="displayed"/>
    </isoform>
    <isoform>
        <id>Q63644-2</id>
        <name>2</name>
        <sequence type="described" ref="VSP_010449 VSP_010450"/>
    </isoform>
</comment>
<comment type="tissue specificity">
    <text evidence="14">Highly expressed in brain, spleen, lung, liver, skeletal muscle, kidney and testis.</text>
</comment>
<comment type="domain">
    <text>The C-terminal auto-inhibitory domain interferes with kinase activity. RHOA binding leads to a conformation change and activation of the kinase. Truncated ROCK1 is constitutively activated.</text>
</comment>
<comment type="PTM">
    <text>Autophosphorylated on serine and threonine residues.</text>
</comment>
<comment type="PTM">
    <text evidence="1">Cleaved by caspase-3 during apoptosis. This leads to constitutive activation of the kinase and membrane blebbing (By similarity).</text>
</comment>
<comment type="disease">
    <text>May play a role in hypertension. Rock1-inhibitors lower the blood pressure in spontaneous hypertensive, renal hypertensive and deoxycorticosterone acetate-induced hypertensive rats, but not in normal rats.</text>
</comment>
<comment type="similarity">
    <text evidence="17">Belongs to the protein kinase superfamily. AGC Ser/Thr protein kinase family.</text>
</comment>
<accession>Q63644</accession>
<accession>Q7TP31</accession>
<organism>
    <name type="scientific">Rattus norvegicus</name>
    <name type="common">Rat</name>
    <dbReference type="NCBI Taxonomy" id="10116"/>
    <lineage>
        <taxon>Eukaryota</taxon>
        <taxon>Metazoa</taxon>
        <taxon>Chordata</taxon>
        <taxon>Craniata</taxon>
        <taxon>Vertebrata</taxon>
        <taxon>Euteleostomi</taxon>
        <taxon>Mammalia</taxon>
        <taxon>Eutheria</taxon>
        <taxon>Euarchontoglires</taxon>
        <taxon>Glires</taxon>
        <taxon>Rodentia</taxon>
        <taxon>Myomorpha</taxon>
        <taxon>Muroidea</taxon>
        <taxon>Muridae</taxon>
        <taxon>Murinae</taxon>
        <taxon>Rattus</taxon>
    </lineage>
</organism>
<sequence>MSTGDSFETRFEKIDNLLRDPKSEVNSDCLLDGLDALVYDLDFPALRKNKNIDNFLSRYKDTINKIRDLRMKAEDYEVVKVIGRGAFGEVQLVRHKSTRKVYAMKLLSKFEMIKRSDSAFFWEERDIMAFANSPWVVQLFYAFQDDRYLYMVMEYMPGGDLVNLMSNYDVPEKWARFYTAEVVLALDAIHSMGFIHRDVKPDNMLLDKSGHLKLADFGTCMKMNKEGMVRCDTAVGTPDYISPEVLKSQGGDGYYGRECDWWSVGVFLYEMLVGDTPFYADSLVGTYSKIMNHKNSLTFPDDNDISKEAKNLICAFLTDREVRLGRNGVEEIKRHLFFKNDQWAWETLRDTVAPVVPDLSSDIDTSNFDDLEEDKGDEETFPIPKAFVGNQLPFVGFTYYSNRRYLPSANPSENRSSSNVDKNVQESLQKTIYKLEEQLHNEMQLKDEMEQKCRTSNIKLDKIMKELDEEGNQRRNLESAVSQIEKEKMLLQHRINEYQRKVEQENEKRRNVENEVSTLKDQLEDLRKASQSSQLANEKLTQLQKQLEEANDLLRTESDTAVRLRKSHTEMSKSVSQLESLNRELQERNRMLENSKSQADKDYYQLQAVLEAERRDRGHDSEMIGDLQARITSLQEEVKHLKHNLERVEGERKEAQDMLNHSEKEKNNLEIDLNYKLKSIQQRLEQEVNEHKVTKARLTDKHQSIEEAKSVAMCEMEKKLKEEREAREKAENRVVETEKQCSMLDVDLKQSQQKLEHLTENKERLEDAVKSLTLQLEQESNKRILLQSELKTQAFEADNLKGLEKQMKQEINTLLEAKRLLEFELAQLTKQYRGNEGQMRELQDQLEAEQYFSTLYKTQVKELKEEIEEKNRENLRKIQELQSEKETLSTQLDLAETKAESEQLARGILEEQYFELTQESKKAASRNRQEITDKDHTVSRLEEANNALTKDIELLRKENEELNERMRTAEEEYKLKKEEEISNLKAAFEKNISTERTLKTQAVNKLAEIMNRKDFKIDRKKANTQDLRKKEKENRKLQLELNQEREKFNQMVVKHQKELNDMQAQLVEECTHRNELQMQLASKESDIEQLRAKLLDLSDSTSVASFPSADETDGNLPVGSACIPYLFIFYSSSSRIEGWLSVPNRGNIKRYGWKKQYVVVSSKKMLFYNDEQDKEQSSPSMVLDIDKLFHVRPVTQGDVYRAETEEIPKIFQILYANEGECRKDIEVEPVQQGEKTNFQNHKGHEFIPTLYHFPANCEACAKPLWHVFKPPPALECRRCHVKSHRDHLDKKEDLIPPCKVSYDVTSARDMLLLACPQDEQKKWVTHLVKKIPKKAPSGFVRASPRTLSTRSTANQSFRKVVKNTSGKTS</sequence>
<evidence type="ECO:0000250" key="1"/>
<evidence type="ECO:0000250" key="2">
    <source>
        <dbReference type="UniProtKB" id="P70335"/>
    </source>
</evidence>
<evidence type="ECO:0000250" key="3">
    <source>
        <dbReference type="UniProtKB" id="Q13464"/>
    </source>
</evidence>
<evidence type="ECO:0000250" key="4">
    <source>
        <dbReference type="UniProtKB" id="Q8MIT6"/>
    </source>
</evidence>
<evidence type="ECO:0000255" key="5"/>
<evidence type="ECO:0000255" key="6">
    <source>
        <dbReference type="PROSITE-ProRule" id="PRU00145"/>
    </source>
</evidence>
<evidence type="ECO:0000255" key="7">
    <source>
        <dbReference type="PROSITE-ProRule" id="PRU00159"/>
    </source>
</evidence>
<evidence type="ECO:0000255" key="8">
    <source>
        <dbReference type="PROSITE-ProRule" id="PRU00226"/>
    </source>
</evidence>
<evidence type="ECO:0000255" key="9">
    <source>
        <dbReference type="PROSITE-ProRule" id="PRU00618"/>
    </source>
</evidence>
<evidence type="ECO:0000255" key="10">
    <source>
        <dbReference type="PROSITE-ProRule" id="PRU01206"/>
    </source>
</evidence>
<evidence type="ECO:0000255" key="11">
    <source>
        <dbReference type="PROSITE-ProRule" id="PRU01207"/>
    </source>
</evidence>
<evidence type="ECO:0000255" key="12">
    <source>
        <dbReference type="PROSITE-ProRule" id="PRU10027"/>
    </source>
</evidence>
<evidence type="ECO:0000269" key="13">
    <source>
    </source>
</evidence>
<evidence type="ECO:0000269" key="14">
    <source>
    </source>
</evidence>
<evidence type="ECO:0000269" key="15">
    <source>
    </source>
</evidence>
<evidence type="ECO:0000303" key="16">
    <source ref="2"/>
</evidence>
<evidence type="ECO:0000305" key="17"/>
<feature type="initiator methionine" description="Removed" evidence="3">
    <location>
        <position position="1"/>
    </location>
</feature>
<feature type="chain" id="PRO_0000086623" description="Rho-associated protein kinase 1">
    <location>
        <begin position="2"/>
        <end position="1369"/>
    </location>
</feature>
<feature type="domain" description="Protein kinase" evidence="7">
    <location>
        <begin position="76"/>
        <end position="338"/>
    </location>
</feature>
<feature type="domain" description="AGC-kinase C-terminal" evidence="9">
    <location>
        <begin position="341"/>
        <end position="409"/>
    </location>
</feature>
<feature type="domain" description="REM-1" evidence="11">
    <location>
        <begin position="479"/>
        <end position="556"/>
    </location>
</feature>
<feature type="domain" description="RhoBD" evidence="10">
    <location>
        <begin position="949"/>
        <end position="1015"/>
    </location>
</feature>
<feature type="domain" description="PH" evidence="6">
    <location>
        <begin position="1133"/>
        <end position="1332"/>
    </location>
</feature>
<feature type="zinc finger region" description="Phorbol-ester/DAG-type" evidence="8">
    <location>
        <begin position="1243"/>
        <end position="1298"/>
    </location>
</feature>
<feature type="region of interest" description="Interaction with FHOD1" evidence="1">
    <location>
        <begin position="368"/>
        <end position="727"/>
    </location>
</feature>
<feature type="region of interest" description="SHROOM3 binding" evidence="3">
    <location>
        <begin position="707"/>
        <end position="946"/>
    </location>
</feature>
<feature type="region of interest" description="RHOA binding" evidence="1">
    <location>
        <begin position="998"/>
        <end position="1010"/>
    </location>
</feature>
<feature type="region of interest" description="Auto-inhibitory" evidence="1">
    <location>
        <begin position="1115"/>
        <end position="1369"/>
    </location>
</feature>
<feature type="coiled-coil region" evidence="5">
    <location>
        <begin position="422"/>
        <end position="692"/>
    </location>
</feature>
<feature type="coiled-coil region" evidence="5">
    <location>
        <begin position="1011"/>
        <end position="1102"/>
    </location>
</feature>
<feature type="active site" description="Proton acceptor" evidence="7 12">
    <location>
        <position position="198"/>
    </location>
</feature>
<feature type="binding site" evidence="7">
    <location>
        <begin position="82"/>
        <end position="90"/>
    </location>
    <ligand>
        <name>ATP</name>
        <dbReference type="ChEBI" id="CHEBI:30616"/>
    </ligand>
</feature>
<feature type="binding site" evidence="7">
    <location>
        <position position="105"/>
    </location>
    <ligand>
        <name>ATP</name>
        <dbReference type="ChEBI" id="CHEBI:30616"/>
    </ligand>
</feature>
<feature type="site" description="Cleavage; by caspase-3" evidence="1">
    <location>
        <begin position="1113"/>
        <end position="1114"/>
    </location>
</feature>
<feature type="modified residue" description="N-acetylserine" evidence="3">
    <location>
        <position position="2"/>
    </location>
</feature>
<feature type="modified residue" description="Phosphoserine" evidence="3">
    <location>
        <position position="1105"/>
    </location>
</feature>
<feature type="modified residue" description="Phosphoserine" evidence="2">
    <location>
        <position position="1108"/>
    </location>
</feature>
<feature type="modified residue" description="Phosphoserine" evidence="3">
    <location>
        <position position="1343"/>
    </location>
</feature>
<feature type="splice variant" id="VSP_010449" description="In isoform 2." evidence="16">
    <location>
        <begin position="1"/>
        <end position="488"/>
    </location>
</feature>
<feature type="splice variant" id="VSP_010450" description="In isoform 2." evidence="16">
    <original>S</original>
    <variation>RLMPSSPCRVGVGIDKWRSHRDRKREGLLTEDVPGSRLEKKLGRIGRAARRNKDGADIQPCLDINDLLCMCRLVPLLGLPLVVTSGTAHVQFMHQVLVDR</variation>
    <location>
        <position position="1369"/>
    </location>
</feature>
<feature type="sequence conflict" description="In Ref. 2; AAP92621." evidence="17" ref="2">
    <original>VGSACIPYLFIFYSSS</original>
    <variation>E</variation>
    <location>
        <begin position="1118"/>
        <end position="1133"/>
    </location>
</feature>
<feature type="sequence conflict" description="In Ref. 2; AAP92621." evidence="17" ref="2">
    <original>S</original>
    <variation>C</variation>
    <location>
        <position position="1283"/>
    </location>
</feature>
<feature type="sequence conflict" description="In Ref. 2; AAP92621." evidence="17" ref="2">
    <original>P</original>
    <variation>S</variation>
    <location>
        <position position="1296"/>
    </location>
</feature>
<feature type="sequence conflict" description="In Ref. 2; AAP92621." evidence="17" ref="2">
    <original>P</original>
    <variation>S</variation>
    <location>
        <position position="1316"/>
    </location>
</feature>
<feature type="sequence conflict" description="In Ref. 2; AAP92621." evidence="17" ref="2">
    <original>KA</original>
    <variation>NP</variation>
    <location>
        <begin position="1334"/>
        <end position="1335"/>
    </location>
</feature>
<dbReference type="EC" id="2.7.11.1" evidence="3"/>
<dbReference type="EMBL" id="U61266">
    <property type="protein sequence ID" value="AAB37571.1"/>
    <property type="molecule type" value="mRNA"/>
</dbReference>
<dbReference type="EMBL" id="AY325220">
    <property type="protein sequence ID" value="AAP92621.1"/>
    <property type="molecule type" value="mRNA"/>
</dbReference>
<dbReference type="RefSeq" id="NP_112360.1">
    <property type="nucleotide sequence ID" value="NM_031098.1"/>
</dbReference>
<dbReference type="SMR" id="Q63644"/>
<dbReference type="BioGRID" id="249634">
    <property type="interactions" value="3"/>
</dbReference>
<dbReference type="CORUM" id="Q63644"/>
<dbReference type="FunCoup" id="Q63644">
    <property type="interactions" value="4154"/>
</dbReference>
<dbReference type="IntAct" id="Q63644">
    <property type="interactions" value="1"/>
</dbReference>
<dbReference type="MINT" id="Q63644"/>
<dbReference type="STRING" id="10116.ENSRNOP00000047378"/>
<dbReference type="BindingDB" id="Q63644"/>
<dbReference type="ChEMBL" id="CHEMBL5509"/>
<dbReference type="iPTMnet" id="Q63644"/>
<dbReference type="PhosphoSitePlus" id="Q63644"/>
<dbReference type="jPOST" id="Q63644"/>
<dbReference type="PaxDb" id="10116-ENSRNOP00000047378"/>
<dbReference type="PeptideAtlas" id="Q63644"/>
<dbReference type="UCSC" id="RGD:620424">
    <molecule id="Q63644-1"/>
    <property type="organism name" value="rat"/>
</dbReference>
<dbReference type="AGR" id="RGD:620424"/>
<dbReference type="RGD" id="620424">
    <property type="gene designation" value="Rock1"/>
</dbReference>
<dbReference type="eggNOG" id="KOG0612">
    <property type="taxonomic scope" value="Eukaryota"/>
</dbReference>
<dbReference type="InParanoid" id="Q63644"/>
<dbReference type="OrthoDB" id="2156623at2759"/>
<dbReference type="PhylomeDB" id="Q63644"/>
<dbReference type="Reactome" id="R-RNO-111465">
    <property type="pathway name" value="Apoptotic cleavage of cellular proteins"/>
</dbReference>
<dbReference type="Reactome" id="R-RNO-3928662">
    <property type="pathway name" value="EPHB-mediated forward signaling"/>
</dbReference>
<dbReference type="Reactome" id="R-RNO-416482">
    <property type="pathway name" value="G alpha (12/13) signalling events"/>
</dbReference>
<dbReference type="Reactome" id="R-RNO-416572">
    <property type="pathway name" value="Sema4D induced cell migration and growth-cone collapse"/>
</dbReference>
<dbReference type="Reactome" id="R-RNO-4420097">
    <property type="pathway name" value="VEGFA-VEGFR2 Pathway"/>
</dbReference>
<dbReference type="Reactome" id="R-RNO-5627117">
    <property type="pathway name" value="RHO GTPases Activate ROCKs"/>
</dbReference>
<dbReference type="Reactome" id="R-RNO-6798695">
    <property type="pathway name" value="Neutrophil degranulation"/>
</dbReference>
<dbReference type="Reactome" id="R-RNO-8980692">
    <property type="pathway name" value="RHOA GTPase cycle"/>
</dbReference>
<dbReference type="Reactome" id="R-RNO-9013026">
    <property type="pathway name" value="RHOB GTPase cycle"/>
</dbReference>
<dbReference type="Reactome" id="R-RNO-9013407">
    <property type="pathway name" value="RHOH GTPase cycle"/>
</dbReference>
<dbReference type="Reactome" id="R-RNO-9013422">
    <property type="pathway name" value="RHOBTB1 GTPase cycle"/>
</dbReference>
<dbReference type="Reactome" id="R-RNO-9696264">
    <property type="pathway name" value="RND3 GTPase cycle"/>
</dbReference>
<dbReference type="SABIO-RK" id="Q63644"/>
<dbReference type="PRO" id="PR:Q63644"/>
<dbReference type="Proteomes" id="UP000002494">
    <property type="component" value="Unplaced"/>
</dbReference>
<dbReference type="GO" id="GO:0032059">
    <property type="term" value="C:bleb"/>
    <property type="evidence" value="ECO:0007669"/>
    <property type="project" value="UniProtKB-SubCell"/>
</dbReference>
<dbReference type="GO" id="GO:0005814">
    <property type="term" value="C:centriole"/>
    <property type="evidence" value="ECO:0007669"/>
    <property type="project" value="UniProtKB-SubCell"/>
</dbReference>
<dbReference type="GO" id="GO:0005737">
    <property type="term" value="C:cytoplasm"/>
    <property type="evidence" value="ECO:0000318"/>
    <property type="project" value="GO_Central"/>
</dbReference>
<dbReference type="GO" id="GO:0010494">
    <property type="term" value="C:cytoplasmic stress granule"/>
    <property type="evidence" value="ECO:0000266"/>
    <property type="project" value="RGD"/>
</dbReference>
<dbReference type="GO" id="GO:0005856">
    <property type="term" value="C:cytoskeleton"/>
    <property type="evidence" value="ECO:0000250"/>
    <property type="project" value="UniProtKB"/>
</dbReference>
<dbReference type="GO" id="GO:0000139">
    <property type="term" value="C:Golgi membrane"/>
    <property type="evidence" value="ECO:0007669"/>
    <property type="project" value="UniProtKB-SubCell"/>
</dbReference>
<dbReference type="GO" id="GO:0030027">
    <property type="term" value="C:lamellipodium"/>
    <property type="evidence" value="ECO:0000250"/>
    <property type="project" value="UniProtKB"/>
</dbReference>
<dbReference type="GO" id="GO:0005886">
    <property type="term" value="C:plasma membrane"/>
    <property type="evidence" value="ECO:0000250"/>
    <property type="project" value="UniProtKB"/>
</dbReference>
<dbReference type="GO" id="GO:0001726">
    <property type="term" value="C:ruffle"/>
    <property type="evidence" value="ECO:0000250"/>
    <property type="project" value="UniProtKB"/>
</dbReference>
<dbReference type="GO" id="GO:0098685">
    <property type="term" value="C:Schaffer collateral - CA1 synapse"/>
    <property type="evidence" value="ECO:0000266"/>
    <property type="project" value="RGD"/>
</dbReference>
<dbReference type="GO" id="GO:0045202">
    <property type="term" value="C:synapse"/>
    <property type="evidence" value="ECO:0000314"/>
    <property type="project" value="SynGO"/>
</dbReference>
<dbReference type="GO" id="GO:0005524">
    <property type="term" value="F:ATP binding"/>
    <property type="evidence" value="ECO:0007669"/>
    <property type="project" value="UniProtKB-KW"/>
</dbReference>
<dbReference type="GO" id="GO:0106310">
    <property type="term" value="F:protein serine kinase activity"/>
    <property type="evidence" value="ECO:0007669"/>
    <property type="project" value="RHEA"/>
</dbReference>
<dbReference type="GO" id="GO:0004674">
    <property type="term" value="F:protein serine/threonine kinase activity"/>
    <property type="evidence" value="ECO:0000250"/>
    <property type="project" value="UniProtKB"/>
</dbReference>
<dbReference type="GO" id="GO:0072518">
    <property type="term" value="F:Rho-dependent protein serine/threonine kinase activity"/>
    <property type="evidence" value="ECO:0000266"/>
    <property type="project" value="RGD"/>
</dbReference>
<dbReference type="GO" id="GO:0031267">
    <property type="term" value="F:small GTPase binding"/>
    <property type="evidence" value="ECO:0000315"/>
    <property type="project" value="RGD"/>
</dbReference>
<dbReference type="GO" id="GO:0008270">
    <property type="term" value="F:zinc ion binding"/>
    <property type="evidence" value="ECO:0007669"/>
    <property type="project" value="UniProtKB-KW"/>
</dbReference>
<dbReference type="GO" id="GO:0030036">
    <property type="term" value="P:actin cytoskeleton organization"/>
    <property type="evidence" value="ECO:0000266"/>
    <property type="project" value="RGD"/>
</dbReference>
<dbReference type="GO" id="GO:0031032">
    <property type="term" value="P:actomyosin structure organization"/>
    <property type="evidence" value="ECO:0000318"/>
    <property type="project" value="GO_Central"/>
</dbReference>
<dbReference type="GO" id="GO:0003180">
    <property type="term" value="P:aortic valve morphogenesis"/>
    <property type="evidence" value="ECO:0000266"/>
    <property type="project" value="RGD"/>
</dbReference>
<dbReference type="GO" id="GO:0003383">
    <property type="term" value="P:apical constriction"/>
    <property type="evidence" value="ECO:0000266"/>
    <property type="project" value="RGD"/>
</dbReference>
<dbReference type="GO" id="GO:0032060">
    <property type="term" value="P:bleb assembly"/>
    <property type="evidence" value="ECO:0000266"/>
    <property type="project" value="RGD"/>
</dbReference>
<dbReference type="GO" id="GO:0097746">
    <property type="term" value="P:blood vessel diameter maintenance"/>
    <property type="evidence" value="ECO:0000266"/>
    <property type="project" value="RGD"/>
</dbReference>
<dbReference type="GO" id="GO:0071560">
    <property type="term" value="P:cellular response to transforming growth factor beta stimulus"/>
    <property type="evidence" value="ECO:0000266"/>
    <property type="project" value="RGD"/>
</dbReference>
<dbReference type="GO" id="GO:0030866">
    <property type="term" value="P:cortical actin cytoskeleton organization"/>
    <property type="evidence" value="ECO:0000318"/>
    <property type="project" value="GO_Central"/>
</dbReference>
<dbReference type="GO" id="GO:0007010">
    <property type="term" value="P:cytoskeleton organization"/>
    <property type="evidence" value="ECO:0000315"/>
    <property type="project" value="RGD"/>
</dbReference>
<dbReference type="GO" id="GO:0048598">
    <property type="term" value="P:embryonic morphogenesis"/>
    <property type="evidence" value="ECO:0000318"/>
    <property type="project" value="GO_Central"/>
</dbReference>
<dbReference type="GO" id="GO:0001837">
    <property type="term" value="P:epithelial to mesenchymal transition"/>
    <property type="evidence" value="ECO:0000266"/>
    <property type="project" value="RGD"/>
</dbReference>
<dbReference type="GO" id="GO:0007159">
    <property type="term" value="P:leukocyte cell-cell adhesion"/>
    <property type="evidence" value="ECO:0000266"/>
    <property type="project" value="RGD"/>
</dbReference>
<dbReference type="GO" id="GO:0050900">
    <property type="term" value="P:leukocyte migration"/>
    <property type="evidence" value="ECO:0000266"/>
    <property type="project" value="RGD"/>
</dbReference>
<dbReference type="GO" id="GO:0050901">
    <property type="term" value="P:leukocyte tethering or rolling"/>
    <property type="evidence" value="ECO:0000266"/>
    <property type="project" value="RGD"/>
</dbReference>
<dbReference type="GO" id="GO:0022614">
    <property type="term" value="P:membrane to membrane docking"/>
    <property type="evidence" value="ECO:0000266"/>
    <property type="project" value="RGD"/>
</dbReference>
<dbReference type="GO" id="GO:0000281">
    <property type="term" value="P:mitotic cytokinesis"/>
    <property type="evidence" value="ECO:0000318"/>
    <property type="project" value="GO_Central"/>
</dbReference>
<dbReference type="GO" id="GO:0097049">
    <property type="term" value="P:motor neuron apoptotic process"/>
    <property type="evidence" value="ECO:0000266"/>
    <property type="project" value="RGD"/>
</dbReference>
<dbReference type="GO" id="GO:0061157">
    <property type="term" value="P:mRNA destabilization"/>
    <property type="evidence" value="ECO:0000266"/>
    <property type="project" value="RGD"/>
</dbReference>
<dbReference type="GO" id="GO:0051451">
    <property type="term" value="P:myoblast migration"/>
    <property type="evidence" value="ECO:0000250"/>
    <property type="project" value="UniProtKB"/>
</dbReference>
<dbReference type="GO" id="GO:1902992">
    <property type="term" value="P:negative regulation of amyloid precursor protein catabolic process"/>
    <property type="evidence" value="ECO:0000266"/>
    <property type="project" value="RGD"/>
</dbReference>
<dbReference type="GO" id="GO:1902430">
    <property type="term" value="P:negative regulation of amyloid-beta formation"/>
    <property type="evidence" value="ECO:0000266"/>
    <property type="project" value="RGD"/>
</dbReference>
<dbReference type="GO" id="GO:0016525">
    <property type="term" value="P:negative regulation of angiogenesis"/>
    <property type="evidence" value="ECO:0000266"/>
    <property type="project" value="RGD"/>
</dbReference>
<dbReference type="GO" id="GO:1903347">
    <property type="term" value="P:negative regulation of bicellular tight junction assembly"/>
    <property type="evidence" value="ECO:0000266"/>
    <property type="project" value="RGD"/>
</dbReference>
<dbReference type="GO" id="GO:0070168">
    <property type="term" value="P:negative regulation of biomineral tissue development"/>
    <property type="evidence" value="ECO:0000266"/>
    <property type="project" value="RGD"/>
</dbReference>
<dbReference type="GO" id="GO:2000672">
    <property type="term" value="P:negative regulation of motor neuron apoptotic process"/>
    <property type="evidence" value="ECO:0000266"/>
    <property type="project" value="RGD"/>
</dbReference>
<dbReference type="GO" id="GO:0140058">
    <property type="term" value="P:neuron projection arborization"/>
    <property type="evidence" value="ECO:0000266"/>
    <property type="project" value="RGD"/>
</dbReference>
<dbReference type="GO" id="GO:0031175">
    <property type="term" value="P:neuron projection development"/>
    <property type="evidence" value="ECO:0000266"/>
    <property type="project" value="RGD"/>
</dbReference>
<dbReference type="GO" id="GO:0090521">
    <property type="term" value="P:podocyte cell migration"/>
    <property type="evidence" value="ECO:0000250"/>
    <property type="project" value="UniProtKB"/>
</dbReference>
<dbReference type="GO" id="GO:1900223">
    <property type="term" value="P:positive regulation of amyloid-beta clearance"/>
    <property type="evidence" value="ECO:0000266"/>
    <property type="project" value="RGD"/>
</dbReference>
<dbReference type="GO" id="GO:0010508">
    <property type="term" value="P:positive regulation of autophagy"/>
    <property type="evidence" value="ECO:0000266"/>
    <property type="project" value="RGD"/>
</dbReference>
<dbReference type="GO" id="GO:0010613">
    <property type="term" value="P:positive regulation of cardiac muscle hypertrophy"/>
    <property type="evidence" value="ECO:0000266"/>
    <property type="project" value="RGD"/>
</dbReference>
<dbReference type="GO" id="GO:1905205">
    <property type="term" value="P:positive regulation of connective tissue replacement"/>
    <property type="evidence" value="ECO:0000266"/>
    <property type="project" value="RGD"/>
</dbReference>
<dbReference type="GO" id="GO:0035306">
    <property type="term" value="P:positive regulation of dephosphorylation"/>
    <property type="evidence" value="ECO:0000266"/>
    <property type="project" value="RGD"/>
</dbReference>
<dbReference type="GO" id="GO:0051894">
    <property type="term" value="P:positive regulation of focal adhesion assembly"/>
    <property type="evidence" value="ECO:0000250"/>
    <property type="project" value="UniProtKB"/>
</dbReference>
<dbReference type="GO" id="GO:0010628">
    <property type="term" value="P:positive regulation of gene expression"/>
    <property type="evidence" value="ECO:0000315"/>
    <property type="project" value="ARUK-UCL"/>
</dbReference>
<dbReference type="GO" id="GO:0043410">
    <property type="term" value="P:positive regulation of MAPK cascade"/>
    <property type="evidence" value="ECO:0000266"/>
    <property type="project" value="RGD"/>
</dbReference>
<dbReference type="GO" id="GO:1900182">
    <property type="term" value="P:positive regulation of protein localization to nucleus"/>
    <property type="evidence" value="ECO:0000266"/>
    <property type="project" value="RGD"/>
</dbReference>
<dbReference type="GO" id="GO:0072659">
    <property type="term" value="P:protein localization to plasma membrane"/>
    <property type="evidence" value="ECO:0000266"/>
    <property type="project" value="RGD"/>
</dbReference>
<dbReference type="GO" id="GO:0032956">
    <property type="term" value="P:regulation of actin cytoskeleton organization"/>
    <property type="evidence" value="ECO:0000250"/>
    <property type="project" value="UniProtKB"/>
</dbReference>
<dbReference type="GO" id="GO:0032970">
    <property type="term" value="P:regulation of actin filament-based process"/>
    <property type="evidence" value="ECO:0000266"/>
    <property type="project" value="RGD"/>
</dbReference>
<dbReference type="GO" id="GO:0110061">
    <property type="term" value="P:regulation of angiotensin-activated signaling pathway"/>
    <property type="evidence" value="ECO:0000266"/>
    <property type="project" value="RGD"/>
</dbReference>
<dbReference type="GO" id="GO:1901888">
    <property type="term" value="P:regulation of cell junction assembly"/>
    <property type="evidence" value="ECO:0000318"/>
    <property type="project" value="GO_Central"/>
</dbReference>
<dbReference type="GO" id="GO:0030334">
    <property type="term" value="P:regulation of cell migration"/>
    <property type="evidence" value="ECO:0000250"/>
    <property type="project" value="UniProtKB"/>
</dbReference>
<dbReference type="GO" id="GO:1903140">
    <property type="term" value="P:regulation of establishment of endothelial barrier"/>
    <property type="evidence" value="ECO:0000266"/>
    <property type="project" value="RGD"/>
</dbReference>
<dbReference type="GO" id="GO:0045616">
    <property type="term" value="P:regulation of keratinocyte differentiation"/>
    <property type="evidence" value="ECO:0000266"/>
    <property type="project" value="RGD"/>
</dbReference>
<dbReference type="GO" id="GO:0070507">
    <property type="term" value="P:regulation of microtubule cytoskeleton organization"/>
    <property type="evidence" value="ECO:0000250"/>
    <property type="project" value="UniProtKB"/>
</dbReference>
<dbReference type="GO" id="GO:0045664">
    <property type="term" value="P:regulation of neuron differentiation"/>
    <property type="evidence" value="ECO:0000266"/>
    <property type="project" value="RGD"/>
</dbReference>
<dbReference type="GO" id="GO:0090128">
    <property type="term" value="P:regulation of synapse maturation"/>
    <property type="evidence" value="ECO:0000266"/>
    <property type="project" value="RGD"/>
</dbReference>
<dbReference type="GO" id="GO:1900242">
    <property type="term" value="P:regulation of synaptic vesicle endocytosis"/>
    <property type="evidence" value="ECO:0000266"/>
    <property type="project" value="RGD"/>
</dbReference>
<dbReference type="GO" id="GO:1990776">
    <property type="term" value="P:response to angiotensin"/>
    <property type="evidence" value="ECO:0000266"/>
    <property type="project" value="RGD"/>
</dbReference>
<dbReference type="GO" id="GO:0071559">
    <property type="term" value="P:response to transforming growth factor beta"/>
    <property type="evidence" value="ECO:0000316"/>
    <property type="project" value="ARUK-UCL"/>
</dbReference>
<dbReference type="GO" id="GO:0007266">
    <property type="term" value="P:Rho protein signal transduction"/>
    <property type="evidence" value="ECO:0000315"/>
    <property type="project" value="MGI"/>
</dbReference>
<dbReference type="CDD" id="cd11639">
    <property type="entry name" value="HR1_ROCK1"/>
    <property type="match status" value="1"/>
</dbReference>
<dbReference type="CDD" id="cd01242">
    <property type="entry name" value="PH_ROCK"/>
    <property type="match status" value="1"/>
</dbReference>
<dbReference type="CDD" id="cd22250">
    <property type="entry name" value="ROCK_SBD"/>
    <property type="match status" value="1"/>
</dbReference>
<dbReference type="CDD" id="cd05622">
    <property type="entry name" value="STKc_ROCK1"/>
    <property type="match status" value="1"/>
</dbReference>
<dbReference type="FunFam" id="1.10.510.10:FF:000047">
    <property type="entry name" value="Rho-associated protein kinase 1"/>
    <property type="match status" value="1"/>
</dbReference>
<dbReference type="FunFam" id="1.20.5.340:FF:000023">
    <property type="entry name" value="Rho-associated protein kinase 1"/>
    <property type="match status" value="1"/>
</dbReference>
<dbReference type="FunFam" id="3.30.60.20:FF:000036">
    <property type="entry name" value="Rho-associated protein kinase 1"/>
    <property type="match status" value="1"/>
</dbReference>
<dbReference type="FunFam" id="2.30.29.30:FF:000033">
    <property type="entry name" value="Rho-associated protein kinase 2"/>
    <property type="match status" value="1"/>
</dbReference>
<dbReference type="FunFam" id="3.30.200.20:FF:000072">
    <property type="entry name" value="Rho-associated protein kinase 2"/>
    <property type="match status" value="1"/>
</dbReference>
<dbReference type="FunFam" id="1.20.5.730:FF:000001">
    <property type="entry name" value="rho-associated protein kinase 2"/>
    <property type="match status" value="1"/>
</dbReference>
<dbReference type="FunFam" id="3.30.200.20:FF:001759">
    <property type="entry name" value="Rho-associated, coiled-coil-containing protein kinase 2b"/>
    <property type="match status" value="1"/>
</dbReference>
<dbReference type="Gene3D" id="1.20.5.340">
    <property type="match status" value="1"/>
</dbReference>
<dbReference type="Gene3D" id="3.30.60.20">
    <property type="match status" value="1"/>
</dbReference>
<dbReference type="Gene3D" id="3.30.200.20">
    <property type="entry name" value="Phosphorylase Kinase, domain 1"/>
    <property type="match status" value="1"/>
</dbReference>
<dbReference type="Gene3D" id="2.30.29.30">
    <property type="entry name" value="Pleckstrin-homology domain (PH domain)/Phosphotyrosine-binding domain (PTB)"/>
    <property type="match status" value="1"/>
</dbReference>
<dbReference type="Gene3D" id="1.20.5.730">
    <property type="entry name" value="Single helix bin"/>
    <property type="match status" value="1"/>
</dbReference>
<dbReference type="Gene3D" id="1.10.510.10">
    <property type="entry name" value="Transferase(Phosphotransferase) domain 1"/>
    <property type="match status" value="1"/>
</dbReference>
<dbReference type="InterPro" id="IPR000961">
    <property type="entry name" value="AGC-kinase_C"/>
</dbReference>
<dbReference type="InterPro" id="IPR046349">
    <property type="entry name" value="C1-like_sf"/>
</dbReference>
<dbReference type="InterPro" id="IPR011072">
    <property type="entry name" value="HR1_rho-bd"/>
</dbReference>
<dbReference type="InterPro" id="IPR011009">
    <property type="entry name" value="Kinase-like_dom_sf"/>
</dbReference>
<dbReference type="InterPro" id="IPR002219">
    <property type="entry name" value="PE/DAG-bd"/>
</dbReference>
<dbReference type="InterPro" id="IPR011993">
    <property type="entry name" value="PH-like_dom_sf"/>
</dbReference>
<dbReference type="InterPro" id="IPR001849">
    <property type="entry name" value="PH_domain"/>
</dbReference>
<dbReference type="InterPro" id="IPR000719">
    <property type="entry name" value="Prot_kinase_dom"/>
</dbReference>
<dbReference type="InterPro" id="IPR017441">
    <property type="entry name" value="Protein_kinase_ATP_BS"/>
</dbReference>
<dbReference type="InterPro" id="IPR050839">
    <property type="entry name" value="Rho-assoc_Ser/Thr_Kinase"/>
</dbReference>
<dbReference type="InterPro" id="IPR020684">
    <property type="entry name" value="ROCK1/ROCK2"/>
</dbReference>
<dbReference type="InterPro" id="IPR037310">
    <property type="entry name" value="ROCK1_HR1"/>
</dbReference>
<dbReference type="InterPro" id="IPR015008">
    <property type="entry name" value="ROCK_Rho-bd_dom"/>
</dbReference>
<dbReference type="InterPro" id="IPR008271">
    <property type="entry name" value="Ser/Thr_kinase_AS"/>
</dbReference>
<dbReference type="PANTHER" id="PTHR22988">
    <property type="entry name" value="MYOTONIC DYSTROPHY S/T KINASE-RELATED"/>
    <property type="match status" value="1"/>
</dbReference>
<dbReference type="PANTHER" id="PTHR22988:SF33">
    <property type="entry name" value="RHO-ASSOCIATED PROTEIN KINASE 1"/>
    <property type="match status" value="1"/>
</dbReference>
<dbReference type="Pfam" id="PF25346">
    <property type="entry name" value="PH_MRCK"/>
    <property type="match status" value="1"/>
</dbReference>
<dbReference type="Pfam" id="PF00069">
    <property type="entry name" value="Pkinase"/>
    <property type="match status" value="1"/>
</dbReference>
<dbReference type="Pfam" id="PF08912">
    <property type="entry name" value="Rho_Binding"/>
    <property type="match status" value="1"/>
</dbReference>
<dbReference type="PIRSF" id="PIRSF037568">
    <property type="entry name" value="Rho_kinase"/>
    <property type="match status" value="1"/>
</dbReference>
<dbReference type="SMART" id="SM00109">
    <property type="entry name" value="C1"/>
    <property type="match status" value="1"/>
</dbReference>
<dbReference type="SMART" id="SM00233">
    <property type="entry name" value="PH"/>
    <property type="match status" value="1"/>
</dbReference>
<dbReference type="SMART" id="SM00133">
    <property type="entry name" value="S_TK_X"/>
    <property type="match status" value="1"/>
</dbReference>
<dbReference type="SMART" id="SM00220">
    <property type="entry name" value="S_TKc"/>
    <property type="match status" value="1"/>
</dbReference>
<dbReference type="SUPFAM" id="SSF57889">
    <property type="entry name" value="Cysteine-rich domain"/>
    <property type="match status" value="1"/>
</dbReference>
<dbReference type="SUPFAM" id="SSF103652">
    <property type="entry name" value="G protein-binding domain"/>
    <property type="match status" value="1"/>
</dbReference>
<dbReference type="SUPFAM" id="SSF90257">
    <property type="entry name" value="Myosin rod fragments"/>
    <property type="match status" value="1"/>
</dbReference>
<dbReference type="SUPFAM" id="SSF50729">
    <property type="entry name" value="PH domain-like"/>
    <property type="match status" value="1"/>
</dbReference>
<dbReference type="SUPFAM" id="SSF56112">
    <property type="entry name" value="Protein kinase-like (PK-like)"/>
    <property type="match status" value="1"/>
</dbReference>
<dbReference type="PROSITE" id="PS51285">
    <property type="entry name" value="AGC_KINASE_CTER"/>
    <property type="match status" value="1"/>
</dbReference>
<dbReference type="PROSITE" id="PS50003">
    <property type="entry name" value="PH_DOMAIN"/>
    <property type="match status" value="1"/>
</dbReference>
<dbReference type="PROSITE" id="PS00107">
    <property type="entry name" value="PROTEIN_KINASE_ATP"/>
    <property type="match status" value="1"/>
</dbReference>
<dbReference type="PROSITE" id="PS50011">
    <property type="entry name" value="PROTEIN_KINASE_DOM"/>
    <property type="match status" value="1"/>
</dbReference>
<dbReference type="PROSITE" id="PS00108">
    <property type="entry name" value="PROTEIN_KINASE_ST"/>
    <property type="match status" value="1"/>
</dbReference>
<dbReference type="PROSITE" id="PS51860">
    <property type="entry name" value="REM_1"/>
    <property type="match status" value="1"/>
</dbReference>
<dbReference type="PROSITE" id="PS51859">
    <property type="entry name" value="RHO_BD"/>
    <property type="match status" value="1"/>
</dbReference>
<dbReference type="PROSITE" id="PS50081">
    <property type="entry name" value="ZF_DAG_PE_2"/>
    <property type="match status" value="1"/>
</dbReference>
<protein>
    <recommendedName>
        <fullName>Rho-associated protein kinase 1</fullName>
        <ecNumber evidence="3">2.7.11.1</ecNumber>
    </recommendedName>
    <alternativeName>
        <fullName>Liver regeneration-related protein LRRG199</fullName>
    </alternativeName>
    <alternativeName>
        <fullName>Rho-associated, coiled-coil-containing protein kinase 1</fullName>
    </alternativeName>
    <alternativeName>
        <fullName>Rho-associated, coiled-coil-containing protein kinase I</fullName>
        <shortName>ROCK-I</shortName>
    </alternativeName>
    <alternativeName>
        <fullName>p150 RhoA-binding kinase ROK beta</fullName>
    </alternativeName>
    <alternativeName>
        <fullName>p160 ROCK-1</fullName>
        <shortName>p160ROCK</shortName>
    </alternativeName>
</protein>
<proteinExistence type="evidence at protein level"/>
<reference key="1">
    <citation type="journal article" date="1996" name="Mol. Cell. Biol.">
        <title>The p160 RhoA-binding kinase ROK alpha is a member of a kinase family and is involved in the reorganization of the cytoskeleton.</title>
        <authorList>
            <person name="Leung T."/>
            <person name="Chen X.-Q."/>
            <person name="Manser E."/>
            <person name="Lim L."/>
        </authorList>
    </citation>
    <scope>NUCLEOTIDE SEQUENCE [MRNA] (ISOFORM 1)</scope>
    <scope>INTERACTION WITH RHOA; RHOB AND RHOC</scope>
    <scope>TISSUE SPECIFICITY</scope>
    <source>
        <tissue>Brain</tissue>
        <tissue>Liver</tissue>
    </source>
</reference>
<reference key="2">
    <citation type="submission" date="2003-06" db="EMBL/GenBank/DDBJ databases">
        <title>Liver regeneration after PH.</title>
        <authorList>
            <person name="Xu C.S."/>
            <person name="Li W.Q."/>
            <person name="Li Y.C."/>
            <person name="Yang K.J."/>
            <person name="Yan H.M."/>
            <person name="Chang C.F."/>
            <person name="Zhao L.F."/>
            <person name="Ma H."/>
            <person name="Wang L."/>
            <person name="Wang S.F."/>
            <person name="Han H.P."/>
            <person name="Wang G.P."/>
            <person name="Chai L.Q."/>
            <person name="Yuan J.Y."/>
            <person name="Shi J.B."/>
            <person name="Rahman S."/>
            <person name="Wang Q.N."/>
            <person name="Zhang J.B."/>
        </authorList>
    </citation>
    <scope>NUCLEOTIDE SEQUENCE [LARGE SCALE MRNA] (ISOFORM 2)</scope>
    <source>
        <tissue>Liver</tissue>
    </source>
</reference>
<reference key="3">
    <citation type="journal article" date="1997" name="Nature">
        <title>Calcium sensitization of smooth muscle mediated by a Rho-associated protein kinase in hypertension.</title>
        <authorList>
            <person name="Uehata M."/>
            <person name="Ishizaki T."/>
            <person name="Satoh H."/>
            <person name="Ono T."/>
            <person name="Kawahara T."/>
            <person name="Morishita T."/>
            <person name="Tamakawa H."/>
            <person name="Yamagami K."/>
            <person name="Inui J."/>
            <person name="Maekawa M."/>
            <person name="Narumiya S."/>
        </authorList>
    </citation>
    <scope>FUNCTION</scope>
    <scope>ROLE IN SMOOTH MUSCLE CONTRACTION AND HYPERTENSION</scope>
    <scope>INHIBITION BY Y-27632</scope>
</reference>
<reference key="4">
    <citation type="journal article" date="2009" name="Circ. Res.">
        <title>ROCK isoform regulation of myosin phosphatase and contractility in vascular smooth muscle cells.</title>
        <authorList>
            <person name="Wang Y."/>
            <person name="Zheng X.R."/>
            <person name="Riddick N."/>
            <person name="Bryden M."/>
            <person name="Baur W."/>
            <person name="Zhang X."/>
            <person name="Surks H.K."/>
        </authorList>
    </citation>
    <scope>FUNCTION</scope>
    <scope>INTERACTION WITH PPP1R12A</scope>
    <scope>SUBCELLULAR LOCATION</scope>
</reference>
<keyword id="KW-0007">Acetylation</keyword>
<keyword id="KW-0025">Alternative splicing</keyword>
<keyword id="KW-0053">Apoptosis</keyword>
<keyword id="KW-0067">ATP-binding</keyword>
<keyword id="KW-1003">Cell membrane</keyword>
<keyword id="KW-0966">Cell projection</keyword>
<keyword id="KW-0175">Coiled coil</keyword>
<keyword id="KW-0963">Cytoplasm</keyword>
<keyword id="KW-0206">Cytoskeleton</keyword>
<keyword id="KW-0333">Golgi apparatus</keyword>
<keyword id="KW-0418">Kinase</keyword>
<keyword id="KW-0460">Magnesium</keyword>
<keyword id="KW-0472">Membrane</keyword>
<keyword id="KW-0479">Metal-binding</keyword>
<keyword id="KW-0547">Nucleotide-binding</keyword>
<keyword id="KW-0597">Phosphoprotein</keyword>
<keyword id="KW-1185">Reference proteome</keyword>
<keyword id="KW-0723">Serine/threonine-protein kinase</keyword>
<keyword id="KW-0808">Transferase</keyword>
<keyword id="KW-0862">Zinc</keyword>
<keyword id="KW-0863">Zinc-finger</keyword>
<gene>
    <name type="primary">Rock1</name>
    <name type="ORF">Ac2-154</name>
</gene>